<proteinExistence type="evidence at protein level"/>
<accession>Q92545</accession>
<organism evidence="9">
    <name type="scientific">Homo sapiens</name>
    <name type="common">Human</name>
    <dbReference type="NCBI Taxonomy" id="9606"/>
    <lineage>
        <taxon>Eukaryota</taxon>
        <taxon>Metazoa</taxon>
        <taxon>Chordata</taxon>
        <taxon>Craniata</taxon>
        <taxon>Vertebrata</taxon>
        <taxon>Euteleostomi</taxon>
        <taxon>Mammalia</taxon>
        <taxon>Eutheria</taxon>
        <taxon>Euarchontoglires</taxon>
        <taxon>Primates</taxon>
        <taxon>Haplorrhini</taxon>
        <taxon>Catarrhini</taxon>
        <taxon>Hominidae</taxon>
        <taxon>Homo</taxon>
    </lineage>
</organism>
<feature type="signal peptide" evidence="3">
    <location>
        <begin position="1"/>
        <end position="22"/>
    </location>
</feature>
<feature type="chain" id="PRO_0000097538" description="Transmembrane protein 131" evidence="3">
    <location>
        <begin position="23"/>
        <end position="1883"/>
    </location>
</feature>
<feature type="topological domain" description="Lumenal" evidence="7">
    <location>
        <begin position="23"/>
        <end position="1117"/>
    </location>
</feature>
<feature type="transmembrane region" description="Helical" evidence="3">
    <location>
        <begin position="1118"/>
        <end position="1138"/>
    </location>
</feature>
<feature type="topological domain" description="Cytoplasmic" evidence="7">
    <location>
        <begin position="1139"/>
        <end position="1883"/>
    </location>
</feature>
<feature type="region of interest" description="PapD-L domain" evidence="2">
    <location>
        <begin position="109"/>
        <end position="283"/>
    </location>
</feature>
<feature type="region of interest" description="Disordered" evidence="4">
    <location>
        <begin position="1198"/>
        <end position="1580"/>
    </location>
</feature>
<feature type="region of interest" description="Disordered" evidence="4">
    <location>
        <begin position="1593"/>
        <end position="1656"/>
    </location>
</feature>
<feature type="region of interest" description="Disordered" evidence="4">
    <location>
        <begin position="1670"/>
        <end position="1712"/>
    </location>
</feature>
<feature type="region of interest" description="Disordered" evidence="4">
    <location>
        <begin position="1766"/>
        <end position="1789"/>
    </location>
</feature>
<feature type="region of interest" description="Disordered" evidence="4">
    <location>
        <begin position="1832"/>
        <end position="1858"/>
    </location>
</feature>
<feature type="compositionally biased region" description="Low complexity" evidence="4">
    <location>
        <begin position="1237"/>
        <end position="1261"/>
    </location>
</feature>
<feature type="compositionally biased region" description="Pro residues" evidence="4">
    <location>
        <begin position="1302"/>
        <end position="1316"/>
    </location>
</feature>
<feature type="compositionally biased region" description="Basic and acidic residues" evidence="4">
    <location>
        <begin position="1330"/>
        <end position="1343"/>
    </location>
</feature>
<feature type="compositionally biased region" description="Basic and acidic residues" evidence="4">
    <location>
        <begin position="1353"/>
        <end position="1364"/>
    </location>
</feature>
<feature type="compositionally biased region" description="Basic residues" evidence="4">
    <location>
        <begin position="1380"/>
        <end position="1394"/>
    </location>
</feature>
<feature type="compositionally biased region" description="Basic and acidic residues" evidence="4">
    <location>
        <begin position="1395"/>
        <end position="1417"/>
    </location>
</feature>
<feature type="compositionally biased region" description="Low complexity" evidence="4">
    <location>
        <begin position="1423"/>
        <end position="1434"/>
    </location>
</feature>
<feature type="compositionally biased region" description="Basic and acidic residues" evidence="4">
    <location>
        <begin position="1436"/>
        <end position="1458"/>
    </location>
</feature>
<feature type="compositionally biased region" description="Polar residues" evidence="4">
    <location>
        <begin position="1510"/>
        <end position="1526"/>
    </location>
</feature>
<feature type="compositionally biased region" description="Polar residues" evidence="4">
    <location>
        <begin position="1542"/>
        <end position="1553"/>
    </location>
</feature>
<feature type="compositionally biased region" description="Pro residues" evidence="4">
    <location>
        <begin position="1602"/>
        <end position="1611"/>
    </location>
</feature>
<feature type="compositionally biased region" description="Low complexity" evidence="4">
    <location>
        <begin position="1619"/>
        <end position="1630"/>
    </location>
</feature>
<feature type="compositionally biased region" description="Polar residues" evidence="4">
    <location>
        <begin position="1678"/>
        <end position="1690"/>
    </location>
</feature>
<feature type="compositionally biased region" description="Low complexity" evidence="4">
    <location>
        <begin position="1773"/>
        <end position="1784"/>
    </location>
</feature>
<feature type="compositionally biased region" description="Low complexity" evidence="4">
    <location>
        <begin position="1837"/>
        <end position="1849"/>
    </location>
</feature>
<feature type="modified residue" description="Phosphoserine" evidence="10">
    <location>
        <position position="803"/>
    </location>
</feature>
<feature type="modified residue" description="Phosphoserine" evidence="14">
    <location>
        <position position="1322"/>
    </location>
</feature>
<feature type="modified residue" description="Phosphoserine" evidence="13">
    <location>
        <position position="1342"/>
    </location>
</feature>
<feature type="modified residue" description="Phosphoserine" evidence="12 14">
    <location>
        <position position="1375"/>
    </location>
</feature>
<feature type="modified residue" description="Phosphoserine" evidence="11 13">
    <location>
        <position position="1863"/>
    </location>
</feature>
<feature type="modified residue" description="Phosphoserine" evidence="14">
    <location>
        <position position="1871"/>
    </location>
</feature>
<feature type="glycosylation site" description="N-linked (GlcNAc...) asparagine" evidence="5">
    <location>
        <position position="300"/>
    </location>
</feature>
<feature type="mutagenesis site" description="Does not affect TRAPPC8 binding." evidence="6">
    <original>R</original>
    <variation>A</variation>
    <location>
        <position position="1533"/>
    </location>
</feature>
<feature type="mutagenesis site" description="Does not affect TRAPPC8 binding. Abrogates interaction with TRAPPC8; when associated with A-1707." evidence="6">
    <original>W</original>
    <variation>A</variation>
    <location>
        <position position="1564"/>
    </location>
</feature>
<feature type="mutagenesis site" description="Does not affect TRAPPC8 binding." evidence="6">
    <original>D</original>
    <variation>A</variation>
    <location>
        <position position="1577"/>
    </location>
</feature>
<feature type="mutagenesis site" description="Does not affect TRAPPC8 binding." evidence="6">
    <original>D</original>
    <variation>A</variation>
    <location>
        <position position="1590"/>
    </location>
</feature>
<feature type="mutagenesis site" description="Does not affect TRAPPC8 binding. Abrogates interaction with TRAPPC8; when associated with A-1564." evidence="6">
    <original>W</original>
    <variation>A</variation>
    <location>
        <position position="1707"/>
    </location>
</feature>
<reference key="1">
    <citation type="journal article" date="2005" name="Nature">
        <title>Generation and annotation of the DNA sequences of human chromosomes 2 and 4.</title>
        <authorList>
            <person name="Hillier L.W."/>
            <person name="Graves T.A."/>
            <person name="Fulton R.S."/>
            <person name="Fulton L.A."/>
            <person name="Pepin K.H."/>
            <person name="Minx P."/>
            <person name="Wagner-McPherson C."/>
            <person name="Layman D."/>
            <person name="Wylie K."/>
            <person name="Sekhon M."/>
            <person name="Becker M.C."/>
            <person name="Fewell G.A."/>
            <person name="Delehaunty K.D."/>
            <person name="Miner T.L."/>
            <person name="Nash W.E."/>
            <person name="Kremitzki C."/>
            <person name="Oddy L."/>
            <person name="Du H."/>
            <person name="Sun H."/>
            <person name="Bradshaw-Cordum H."/>
            <person name="Ali J."/>
            <person name="Carter J."/>
            <person name="Cordes M."/>
            <person name="Harris A."/>
            <person name="Isak A."/>
            <person name="van Brunt A."/>
            <person name="Nguyen C."/>
            <person name="Du F."/>
            <person name="Courtney L."/>
            <person name="Kalicki J."/>
            <person name="Ozersky P."/>
            <person name="Abbott S."/>
            <person name="Armstrong J."/>
            <person name="Belter E.A."/>
            <person name="Caruso L."/>
            <person name="Cedroni M."/>
            <person name="Cotton M."/>
            <person name="Davidson T."/>
            <person name="Desai A."/>
            <person name="Elliott G."/>
            <person name="Erb T."/>
            <person name="Fronick C."/>
            <person name="Gaige T."/>
            <person name="Haakenson W."/>
            <person name="Haglund K."/>
            <person name="Holmes A."/>
            <person name="Harkins R."/>
            <person name="Kim K."/>
            <person name="Kruchowski S.S."/>
            <person name="Strong C.M."/>
            <person name="Grewal N."/>
            <person name="Goyea E."/>
            <person name="Hou S."/>
            <person name="Levy A."/>
            <person name="Martinka S."/>
            <person name="Mead K."/>
            <person name="McLellan M.D."/>
            <person name="Meyer R."/>
            <person name="Randall-Maher J."/>
            <person name="Tomlinson C."/>
            <person name="Dauphin-Kohlberg S."/>
            <person name="Kozlowicz-Reilly A."/>
            <person name="Shah N."/>
            <person name="Swearengen-Shahid S."/>
            <person name="Snider J."/>
            <person name="Strong J.T."/>
            <person name="Thompson J."/>
            <person name="Yoakum M."/>
            <person name="Leonard S."/>
            <person name="Pearman C."/>
            <person name="Trani L."/>
            <person name="Radionenko M."/>
            <person name="Waligorski J.E."/>
            <person name="Wang C."/>
            <person name="Rock S.M."/>
            <person name="Tin-Wollam A.-M."/>
            <person name="Maupin R."/>
            <person name="Latreille P."/>
            <person name="Wendl M.C."/>
            <person name="Yang S.-P."/>
            <person name="Pohl C."/>
            <person name="Wallis J.W."/>
            <person name="Spieth J."/>
            <person name="Bieri T.A."/>
            <person name="Berkowicz N."/>
            <person name="Nelson J.O."/>
            <person name="Osborne J."/>
            <person name="Ding L."/>
            <person name="Meyer R."/>
            <person name="Sabo A."/>
            <person name="Shotland Y."/>
            <person name="Sinha P."/>
            <person name="Wohldmann P.E."/>
            <person name="Cook L.L."/>
            <person name="Hickenbotham M.T."/>
            <person name="Eldred J."/>
            <person name="Williams D."/>
            <person name="Jones T.A."/>
            <person name="She X."/>
            <person name="Ciccarelli F.D."/>
            <person name="Izaurralde E."/>
            <person name="Taylor J."/>
            <person name="Schmutz J."/>
            <person name="Myers R.M."/>
            <person name="Cox D.R."/>
            <person name="Huang X."/>
            <person name="McPherson J.D."/>
            <person name="Mardis E.R."/>
            <person name="Clifton S.W."/>
            <person name="Warren W.C."/>
            <person name="Chinwalla A.T."/>
            <person name="Eddy S.R."/>
            <person name="Marra M.A."/>
            <person name="Ovcharenko I."/>
            <person name="Furey T.S."/>
            <person name="Miller W."/>
            <person name="Eichler E.E."/>
            <person name="Bork P."/>
            <person name="Suyama M."/>
            <person name="Torrents D."/>
            <person name="Waterston R.H."/>
            <person name="Wilson R.K."/>
        </authorList>
    </citation>
    <scope>NUCLEOTIDE SEQUENCE [LARGE SCALE GENOMIC DNA]</scope>
</reference>
<reference key="2">
    <citation type="journal article" date="1996" name="DNA Res.">
        <title>Prediction of the coding sequences of unidentified human genes. VI. The coding sequences of 80 new genes (KIAA0201-KIAA0280) deduced by analysis of cDNA clones from cell line KG-1 and brain.</title>
        <authorList>
            <person name="Nagase T."/>
            <person name="Seki N."/>
            <person name="Ishikawa K."/>
            <person name="Ohira M."/>
            <person name="Kawarabayasi Y."/>
            <person name="Ohara O."/>
            <person name="Tanaka A."/>
            <person name="Kotani H."/>
            <person name="Miyajima N."/>
            <person name="Nomura N."/>
        </authorList>
    </citation>
    <scope>NUCLEOTIDE SEQUENCE [LARGE SCALE MRNA] OF 79-1883</scope>
    <source>
        <tissue>Bone marrow</tissue>
    </source>
</reference>
<reference key="3">
    <citation type="journal article" date="2006" name="Nat. Biotechnol.">
        <title>A probability-based approach for high-throughput protein phosphorylation analysis and site localization.</title>
        <authorList>
            <person name="Beausoleil S.A."/>
            <person name="Villen J."/>
            <person name="Gerber S.A."/>
            <person name="Rush J."/>
            <person name="Gygi S.P."/>
        </authorList>
    </citation>
    <scope>PHOSPHORYLATION [LARGE SCALE ANALYSIS] AT SER-803</scope>
    <scope>IDENTIFICATION BY MASS SPECTROMETRY [LARGE SCALE ANALYSIS]</scope>
    <source>
        <tissue>Cervix carcinoma</tissue>
    </source>
</reference>
<reference key="4">
    <citation type="journal article" date="2008" name="Proc. Natl. Acad. Sci. U.S.A.">
        <title>A quantitative atlas of mitotic phosphorylation.</title>
        <authorList>
            <person name="Dephoure N."/>
            <person name="Zhou C."/>
            <person name="Villen J."/>
            <person name="Beausoleil S.A."/>
            <person name="Bakalarski C.E."/>
            <person name="Elledge S.J."/>
            <person name="Gygi S.P."/>
        </authorList>
    </citation>
    <scope>PHOSPHORYLATION [LARGE SCALE ANALYSIS] AT SER-1863</scope>
    <scope>IDENTIFICATION BY MASS SPECTROMETRY [LARGE SCALE ANALYSIS]</scope>
    <source>
        <tissue>Cervix carcinoma</tissue>
    </source>
</reference>
<reference key="5">
    <citation type="journal article" date="2009" name="J. Proteome Res.">
        <title>Glycoproteomics analysis of human liver tissue by combination of multiple enzyme digestion and hydrazide chemistry.</title>
        <authorList>
            <person name="Chen R."/>
            <person name="Jiang X."/>
            <person name="Sun D."/>
            <person name="Han G."/>
            <person name="Wang F."/>
            <person name="Ye M."/>
            <person name="Wang L."/>
            <person name="Zou H."/>
        </authorList>
    </citation>
    <scope>GLYCOSYLATION [LARGE SCALE ANALYSIS] AT ASN-300</scope>
    <source>
        <tissue>Liver</tissue>
    </source>
</reference>
<reference key="6">
    <citation type="journal article" date="2010" name="Sci. Signal.">
        <title>Quantitative phosphoproteomics reveals widespread full phosphorylation site occupancy during mitosis.</title>
        <authorList>
            <person name="Olsen J.V."/>
            <person name="Vermeulen M."/>
            <person name="Santamaria A."/>
            <person name="Kumar C."/>
            <person name="Miller M.L."/>
            <person name="Jensen L.J."/>
            <person name="Gnad F."/>
            <person name="Cox J."/>
            <person name="Jensen T.S."/>
            <person name="Nigg E.A."/>
            <person name="Brunak S."/>
            <person name="Mann M."/>
        </authorList>
    </citation>
    <scope>PHOSPHORYLATION [LARGE SCALE ANALYSIS] AT SER-1375</scope>
    <scope>IDENTIFICATION BY MASS SPECTROMETRY [LARGE SCALE ANALYSIS]</scope>
    <source>
        <tissue>Cervix carcinoma</tissue>
    </source>
</reference>
<reference key="7">
    <citation type="journal article" date="2011" name="Sci. Signal.">
        <title>System-wide temporal characterization of the proteome and phosphoproteome of human embryonic stem cell differentiation.</title>
        <authorList>
            <person name="Rigbolt K.T."/>
            <person name="Prokhorova T.A."/>
            <person name="Akimov V."/>
            <person name="Henningsen J."/>
            <person name="Johansen P.T."/>
            <person name="Kratchmarova I."/>
            <person name="Kassem M."/>
            <person name="Mann M."/>
            <person name="Olsen J.V."/>
            <person name="Blagoev B."/>
        </authorList>
    </citation>
    <scope>IDENTIFICATION BY MASS SPECTROMETRY [LARGE SCALE ANALYSIS]</scope>
</reference>
<reference key="8">
    <citation type="journal article" date="2013" name="J. Proteome Res.">
        <title>Toward a comprehensive characterization of a human cancer cell phosphoproteome.</title>
        <authorList>
            <person name="Zhou H."/>
            <person name="Di Palma S."/>
            <person name="Preisinger C."/>
            <person name="Peng M."/>
            <person name="Polat A.N."/>
            <person name="Heck A.J."/>
            <person name="Mohammed S."/>
        </authorList>
    </citation>
    <scope>PHOSPHORYLATION [LARGE SCALE ANALYSIS] AT SER-1342 AND SER-1863</scope>
    <scope>IDENTIFICATION BY MASS SPECTROMETRY [LARGE SCALE ANALYSIS]</scope>
    <source>
        <tissue>Cervix carcinoma</tissue>
        <tissue>Erythroleukemia</tissue>
    </source>
</reference>
<reference key="9">
    <citation type="journal article" date="2014" name="J. Proteomics">
        <title>An enzyme assisted RP-RPLC approach for in-depth analysis of human liver phosphoproteome.</title>
        <authorList>
            <person name="Bian Y."/>
            <person name="Song C."/>
            <person name="Cheng K."/>
            <person name="Dong M."/>
            <person name="Wang F."/>
            <person name="Huang J."/>
            <person name="Sun D."/>
            <person name="Wang L."/>
            <person name="Ye M."/>
            <person name="Zou H."/>
        </authorList>
    </citation>
    <scope>PHOSPHORYLATION [LARGE SCALE ANALYSIS] AT SER-1322; SER-1375 AND SER-1871</scope>
    <scope>IDENTIFICATION BY MASS SPECTROMETRY [LARGE SCALE ANALYSIS]</scope>
    <source>
        <tissue>Liver</tissue>
    </source>
</reference>
<reference key="10">
    <citation type="journal article" date="2020" name="Sci. Adv.">
        <title>Broadly conserved roles of TMEM131 family proteins in intracellular collagen assembly and secretory cargo trafficking.</title>
        <authorList>
            <person name="Zhang Z."/>
            <person name="Bai M."/>
            <person name="Barbosa G.O."/>
            <person name="Chen A."/>
            <person name="Wei Y."/>
            <person name="Luo S."/>
            <person name="Wang X."/>
            <person name="Wang B."/>
            <person name="Tsukui T."/>
            <person name="Li H."/>
            <person name="Sheppard D."/>
            <person name="Kornberg T.B."/>
            <person name="Ma D.K."/>
        </authorList>
    </citation>
    <scope>FUNCTION</scope>
    <scope>INTERACTION WITH COL1A2 AND TRAPPC8</scope>
    <scope>DOMAIN PAPD-L</scope>
    <scope>MUTAGENESIS OF ARG-1533; TRP-1564; ASP-1577; ASP-1590 AND TRP-1707</scope>
</reference>
<name>TM131_HUMAN</name>
<sequence>MGKRAGGGATGATTAAVSTSAGAGLEPAAARSGGPRSAAAGLLGALHLVMTLVVAAARAEKEAFVQSESIIEVLRFDDGGLLQTETTLGLSSYQQKSISLYRGNCRPIRFEPPMLDFHEQPVGMPKMEKVYLHNPSSEETITLVSISATTSHFHASFFQNRKILPGGNTSFDVVFLARVVGNVENTLFINTSNHGVFTYQVFGVGVPNPYRLRPFLGARVPVNSSFSPIINIHNPHSEPLQVVEMYSSGGDLHLELPTGQQGGTRKLWEIPPYETKGVMRASFSSREADNHTAFIRIKTNASDSTEFIILPVEVEVTTAPGIYSSTEMLDFGTLRTQDLPKVLNLHLLNSGTKDVPITSVRPTPQNDAITVHFKPITLKASESKYTKVASISFDASKAKKPSQFSGKITVKAKEKSYSKLEIPYQAEVLDGYLGFDHAATLFHIRDSPADPVERPIYLTNTFSFAILIHDVLLPEEAKTMFKVHNFSKPVLILPNESGYIFTLLFMPSTSSMHIDNNILLITNASKFHLPVRVYTGFLDYFVLPPKIEERFIDFGVLSATEASNILFAIINSNPIELAIKSWHIIGDGLSIELVAVERGNRTTIISSLPEFEKSSLSDQSSVTLASGYFAVFRVKLTAKKLEGIHDGAIQITTDYEILTIPVKAVIAVGSLTCFPKHVVLPPSFPGKIVHQSLNIMNSFSQKVKIQQIRSLSEDVRFYYKRLRGNKEDLEPGKKSKIANIYFDPGLQCGDHCYVGLPFLSKSEPKVQPGVAMQEDMWDADWDLHQSLFKGWTGIKENSGHRLSAIFEVNTDLQKNIISKITAELSWPSILSSPRHLKFPLTNTNCSSEEEITLENPADVPVYVQFIPLALYSNPSVFVDKLVSRFNLSKVAKIDLRTLEFQVFRNSAHPLQSSTGFMEGLSRHLILNLILKPGEKKSVKVKFTPVHNRTVSSLIIVRNNLTVMDAVMVQGQGTTENLRVAGKLPGPGSSLRFKITEALLKDCTDSLKLREPNFTLKRTFKVENTGQLQIHIETIEISGYSCEGYGFKVVNCQEFTLSANASRDIIILFTPDFTASRVIRELKFITTSGSEFVFILNASLPYHMLATCAEALPRPNWELALYIIISGIMSALFLLVIGTAYLEAQGIWEPFRRRLSFEASNPPFDVGRPFDLRRIVGISSEGNLNTLSCDPGHSRGFCGAGGSSSRPSAGSHKQCGPSVHPHSSHSNRNSADVENVRAKNSSSTSSRTSAQAASSQSANKTSPLVLDSNTVTQGHTAGRKSKGAKQSQHGSQHHAHSPLEQHPQPPLPPPVPQPQEPQPERLSPAPLAHPSHPERASSARHSSEDSDITSLIEAMDKDFDHHDSPALEVFTEQPPSPLPKSKGKGKPLQRKVKPPKKQEEKEKKGKGKPQEDELKDSLADDDSSSTTTETSNPDTEPLLKEDTEKQKGKQAMPEKHESEMSQVKQKSKKLLNIKKEIPTDVKPSSLELPYTPPLESKQRRNLPSKIPLPTAMTSGSKSRNAQKTKGTSKLVDNRPPALAKFLPNSQELGNTSSSEGEKDSPPPEWDSVPVHKPGSSTDSLYKLSLQTLNADIFLKQRQTSPTPASPSPPAAPCPFVARGSYSSIVNSSSSSDPKIKQPNGSKHKLTKAASLPGKNGNPTFAAVTAGYDKSPGGNGFAKVSSNKTGFSSSLGISHAPVDSDGSDSSGLWSPVSNPSSPDFTPLNSFSAFGNSFNLTGEVFSKLGLSRSCNQASQRSWNEFNSGPSYLWESPATDPSPSWPASSGSPTHTATSVLGNTSGLWSTTPFSSSIWSSNLSSALPFTTPANTLASIGLMGTENSPAPHAPSTSSPADDLGQTYNPWRIWSPTIGRRSSDPWSNSHFPHEN</sequence>
<comment type="function">
    <text evidence="1 6">Collagen binding transmembrane protein involved in collagen secretion by recruiting the ER-to-Golgi transport complex TRAPPIII (PubMed:32095531). May play a role in the immune response to viral infection.</text>
</comment>
<comment type="subunit">
    <text evidence="6">Interacts (via PapD-L domain) with COL1A2 (via C-terminus); the interaction is direct, may occur with other collagen proteins, and is involved in assembly and TRAPPIII ER-to-Golgi transport complex-dependent secretion of collagen (PubMed:32095531). Interacts (via C-terminus) with TRAPPC8 (via C-terminus); the interaction is direct (PubMed:32095531).</text>
</comment>
<comment type="subcellular location">
    <subcellularLocation>
        <location evidence="3">Membrane</location>
        <topology evidence="3">Single-pass type I membrane protein</topology>
    </subcellularLocation>
</comment>
<comment type="domain">
    <text evidence="6">Possesses a PapD-like (PapD-L) domain similar to PapD domains involved in assembly and secretion of bacterial pilus components (PubMed:32095531). The PapD-L domain can bind collagens and is probably involved in collagen assembly and secretion (PubMed:32095531).</text>
</comment>
<comment type="similarity">
    <text evidence="7">Belongs to the TMEM131 family.</text>
</comment>
<keyword id="KW-0325">Glycoprotein</keyword>
<keyword id="KW-0472">Membrane</keyword>
<keyword id="KW-0597">Phosphoprotein</keyword>
<keyword id="KW-1267">Proteomics identification</keyword>
<keyword id="KW-1185">Reference proteome</keyword>
<keyword id="KW-0732">Signal</keyword>
<keyword id="KW-0812">Transmembrane</keyword>
<keyword id="KW-1133">Transmembrane helix</keyword>
<evidence type="ECO:0000250" key="1"/>
<evidence type="ECO:0000250" key="2">
    <source>
        <dbReference type="UniProtKB" id="Q18264"/>
    </source>
</evidence>
<evidence type="ECO:0000255" key="3"/>
<evidence type="ECO:0000256" key="4">
    <source>
        <dbReference type="SAM" id="MobiDB-lite"/>
    </source>
</evidence>
<evidence type="ECO:0000269" key="5">
    <source>
    </source>
</evidence>
<evidence type="ECO:0000269" key="6">
    <source>
    </source>
</evidence>
<evidence type="ECO:0000305" key="7"/>
<evidence type="ECO:0000312" key="8">
    <source>
        <dbReference type="HGNC" id="HGNC:30366"/>
    </source>
</evidence>
<evidence type="ECO:0000312" key="9">
    <source>
        <dbReference type="Proteomes" id="UP000005640"/>
    </source>
</evidence>
<evidence type="ECO:0007744" key="10">
    <source>
    </source>
</evidence>
<evidence type="ECO:0007744" key="11">
    <source>
    </source>
</evidence>
<evidence type="ECO:0007744" key="12">
    <source>
    </source>
</evidence>
<evidence type="ECO:0007744" key="13">
    <source>
    </source>
</evidence>
<evidence type="ECO:0007744" key="14">
    <source>
    </source>
</evidence>
<gene>
    <name evidence="8" type="primary">TMEM131</name>
    <name type="synonym">KIAA0257</name>
    <name type="synonym">RW1</name>
</gene>
<protein>
    <recommendedName>
        <fullName>Transmembrane protein 131</fullName>
    </recommendedName>
    <alternativeName>
        <fullName>Protein RW1</fullName>
    </alternativeName>
</protein>
<dbReference type="EMBL" id="AC079337">
    <property type="status" value="NOT_ANNOTATED_CDS"/>
    <property type="molecule type" value="Genomic_DNA"/>
</dbReference>
<dbReference type="EMBL" id="AC016699">
    <property type="status" value="NOT_ANNOTATED_CDS"/>
    <property type="molecule type" value="Genomic_DNA"/>
</dbReference>
<dbReference type="EMBL" id="D87446">
    <property type="protein sequence ID" value="BAA13387.1"/>
    <property type="molecule type" value="mRNA"/>
</dbReference>
<dbReference type="CCDS" id="CCDS46368.1"/>
<dbReference type="RefSeq" id="NP_056163.1">
    <property type="nucleotide sequence ID" value="NM_015348.2"/>
</dbReference>
<dbReference type="SMR" id="Q92545"/>
<dbReference type="BioGRID" id="117052">
    <property type="interactions" value="194"/>
</dbReference>
<dbReference type="FunCoup" id="Q92545">
    <property type="interactions" value="929"/>
</dbReference>
<dbReference type="IntAct" id="Q92545">
    <property type="interactions" value="88"/>
</dbReference>
<dbReference type="MINT" id="Q92545"/>
<dbReference type="STRING" id="9606.ENSP00000186436"/>
<dbReference type="GlyConnect" id="1850">
    <property type="glycosylation" value="4 N-Linked glycans (3 sites)"/>
</dbReference>
<dbReference type="GlyCosmos" id="Q92545">
    <property type="glycosylation" value="4 sites, 3 glycans"/>
</dbReference>
<dbReference type="GlyGen" id="Q92545">
    <property type="glycosylation" value="15 sites, 15 N-linked glycans (6 sites), 1 O-linked glycan (4 sites)"/>
</dbReference>
<dbReference type="iPTMnet" id="Q92545"/>
<dbReference type="PhosphoSitePlus" id="Q92545"/>
<dbReference type="BioMuta" id="TMEM131"/>
<dbReference type="DMDM" id="327478552"/>
<dbReference type="jPOST" id="Q92545"/>
<dbReference type="MassIVE" id="Q92545"/>
<dbReference type="PaxDb" id="9606-ENSP00000186436"/>
<dbReference type="PeptideAtlas" id="Q92545"/>
<dbReference type="ProteomicsDB" id="75306"/>
<dbReference type="Pumba" id="Q92545"/>
<dbReference type="Antibodypedia" id="9002">
    <property type="antibodies" value="23 antibodies from 9 providers"/>
</dbReference>
<dbReference type="DNASU" id="23505"/>
<dbReference type="Ensembl" id="ENST00000186436.10">
    <property type="protein sequence ID" value="ENSP00000186436.5"/>
    <property type="gene ID" value="ENSG00000075568.17"/>
</dbReference>
<dbReference type="Ensembl" id="ENST00000708031.1">
    <property type="protein sequence ID" value="ENSP00000517074.1"/>
    <property type="gene ID" value="ENSG00000291574.1"/>
</dbReference>
<dbReference type="GeneID" id="23505"/>
<dbReference type="KEGG" id="hsa:23505"/>
<dbReference type="MANE-Select" id="ENST00000186436.10">
    <property type="protein sequence ID" value="ENSP00000186436.5"/>
    <property type="RefSeq nucleotide sequence ID" value="NM_015348.2"/>
    <property type="RefSeq protein sequence ID" value="NP_056163.1"/>
</dbReference>
<dbReference type="UCSC" id="uc002syh.5">
    <property type="organism name" value="human"/>
</dbReference>
<dbReference type="AGR" id="HGNC:30366"/>
<dbReference type="CTD" id="23505"/>
<dbReference type="DisGeNET" id="23505"/>
<dbReference type="GeneCards" id="TMEM131"/>
<dbReference type="HGNC" id="HGNC:30366">
    <property type="gene designation" value="TMEM131"/>
</dbReference>
<dbReference type="HPA" id="ENSG00000075568">
    <property type="expression patterns" value="Low tissue specificity"/>
</dbReference>
<dbReference type="MIM" id="615659">
    <property type="type" value="gene"/>
</dbReference>
<dbReference type="neXtProt" id="NX_Q92545"/>
<dbReference type="OpenTargets" id="ENSG00000075568"/>
<dbReference type="PharmGKB" id="PA143485651"/>
<dbReference type="VEuPathDB" id="HostDB:ENSG00000075568"/>
<dbReference type="eggNOG" id="KOG3620">
    <property type="taxonomic scope" value="Eukaryota"/>
</dbReference>
<dbReference type="GeneTree" id="ENSGT00530000063614"/>
<dbReference type="HOGENOM" id="CLU_002491_1_1_1"/>
<dbReference type="InParanoid" id="Q92545"/>
<dbReference type="OMA" id="NQHTNRT"/>
<dbReference type="OrthoDB" id="168404at2759"/>
<dbReference type="PAN-GO" id="Q92545">
    <property type="GO annotations" value="1 GO annotation based on evolutionary models"/>
</dbReference>
<dbReference type="PhylomeDB" id="Q92545"/>
<dbReference type="TreeFam" id="TF321435"/>
<dbReference type="PathwayCommons" id="Q92545"/>
<dbReference type="SignaLink" id="Q92545"/>
<dbReference type="BioGRID-ORCS" id="23505">
    <property type="hits" value="23 hits in 1159 CRISPR screens"/>
</dbReference>
<dbReference type="CD-CODE" id="232F8A39">
    <property type="entry name" value="P-body"/>
</dbReference>
<dbReference type="CD-CODE" id="DEE660B4">
    <property type="entry name" value="Stress granule"/>
</dbReference>
<dbReference type="ChiTaRS" id="TMEM131">
    <property type="organism name" value="human"/>
</dbReference>
<dbReference type="GeneWiki" id="TMEM131"/>
<dbReference type="GenomeRNAi" id="23505"/>
<dbReference type="Pharos" id="Q92545">
    <property type="development level" value="Tdark"/>
</dbReference>
<dbReference type="PRO" id="PR:Q92545"/>
<dbReference type="Proteomes" id="UP000005640">
    <property type="component" value="Chromosome 2"/>
</dbReference>
<dbReference type="RNAct" id="Q92545">
    <property type="molecule type" value="protein"/>
</dbReference>
<dbReference type="Bgee" id="ENSG00000075568">
    <property type="expression patterns" value="Expressed in bronchial epithelial cell and 215 other cell types or tissues"/>
</dbReference>
<dbReference type="ExpressionAtlas" id="Q92545">
    <property type="expression patterns" value="baseline and differential"/>
</dbReference>
<dbReference type="GO" id="GO:0016020">
    <property type="term" value="C:membrane"/>
    <property type="evidence" value="ECO:0000318"/>
    <property type="project" value="GO_Central"/>
</dbReference>
<dbReference type="GO" id="GO:0005518">
    <property type="term" value="F:collagen binding"/>
    <property type="evidence" value="ECO:0000353"/>
    <property type="project" value="UniProtKB"/>
</dbReference>
<dbReference type="GO" id="GO:0032964">
    <property type="term" value="P:collagen biosynthetic process"/>
    <property type="evidence" value="ECO:0000315"/>
    <property type="project" value="UniProtKB"/>
</dbReference>
<dbReference type="Gene3D" id="2.60.40.10">
    <property type="entry name" value="Immunoglobulins"/>
    <property type="match status" value="3"/>
</dbReference>
<dbReference type="InterPro" id="IPR013783">
    <property type="entry name" value="Ig-like_fold"/>
</dbReference>
<dbReference type="InterPro" id="IPR056311">
    <property type="entry name" value="Ig_TMEM131_2"/>
</dbReference>
<dbReference type="InterPro" id="IPR055435">
    <property type="entry name" value="Ig_TMEM131L_3"/>
</dbReference>
<dbReference type="InterPro" id="IPR055436">
    <property type="entry name" value="Ig_TMEM131L_4"/>
</dbReference>
<dbReference type="InterPro" id="IPR055437">
    <property type="entry name" value="Ig_TMEM131L_5"/>
</dbReference>
<dbReference type="InterPro" id="IPR039877">
    <property type="entry name" value="TMEM131-like"/>
</dbReference>
<dbReference type="InterPro" id="IPR045695">
    <property type="entry name" value="TMEM131-like_Ig_dom2"/>
</dbReference>
<dbReference type="InterPro" id="IPR022113">
    <property type="entry name" value="TMEM131-like_N"/>
</dbReference>
<dbReference type="PANTHER" id="PTHR22050">
    <property type="entry name" value="RW1 PROTEIN HOMOLOG"/>
    <property type="match status" value="1"/>
</dbReference>
<dbReference type="PANTHER" id="PTHR22050:SF1">
    <property type="entry name" value="TRANSMEMBRANE PROTEIN 131"/>
    <property type="match status" value="1"/>
</dbReference>
<dbReference type="Pfam" id="PF24495">
    <property type="entry name" value="Ig_TMEM131_2"/>
    <property type="match status" value="1"/>
</dbReference>
<dbReference type="Pfam" id="PF19532">
    <property type="entry name" value="Ig_TMEM131L_2nd"/>
    <property type="match status" value="1"/>
</dbReference>
<dbReference type="Pfam" id="PF24498">
    <property type="entry name" value="Ig_TMEM131L_3"/>
    <property type="match status" value="1"/>
</dbReference>
<dbReference type="Pfam" id="PF24499">
    <property type="entry name" value="Ig_TMEM131L_4"/>
    <property type="match status" value="1"/>
</dbReference>
<dbReference type="Pfam" id="PF24501">
    <property type="entry name" value="Ig_TMEM131L_5"/>
    <property type="match status" value="1"/>
</dbReference>
<dbReference type="Pfam" id="PF12371">
    <property type="entry name" value="TMEM131_like_N"/>
    <property type="match status" value="1"/>
</dbReference>